<sequence length="602" mass="66926">MKTKAPMKNIRNFSIIAHIDHGKSTLADCLISECNAISNREMKSQVMDTMDIEKERGITIKAQSVRLNYTFKGEDYVLNLIDTPGHVDFSYEVSRSLCSCEGALLVVDATQGVEAQTIANVYIALDNNLEILPVINKIDLPNANVLEVKQDIEDTIGIDCFSANEVSAKAKLGIKDLLEKIITTIPAPSGDFNAPLKALIYDSWFDNYLGALALVRIMDGSINTEQEILVMGTGKKHGVLGLYYPNPLKKIPTKSLECGEIGIVSLGLKSVTDIAVGDTLTDAKNPTPKPIEGFMPAKPFVFAGLYPIETDRFEDLREALLKLQLNDCALNFEPESSVALGFGFRVGFLGLLHMEVIKERLEREFSLNLIATAPTVVYEVHLTDNSVKYVQNPSELPPENHIACIKEPFVRATIITPSEFLGNLMQLLNNKRGIQEKMEYLNQSRVMLTYSLPSNEIVMDFYDKLKSCTKGYASFDYEPIENREAHLVKLDVRVAGDVVDALSIIIDKNKAYEKGRALVETMKELIPRQLFEVAIQASVGNKIIARETIKSVGKNVTAKCYGGDITRKRKLLEKQKEGKKRMKAIGKVELPQEAFLAILKID</sequence>
<protein>
    <recommendedName>
        <fullName evidence="1">Elongation factor 4</fullName>
        <shortName evidence="1">EF-4</shortName>
        <ecNumber evidence="1">3.6.5.n1</ecNumber>
    </recommendedName>
    <alternativeName>
        <fullName evidence="1">Ribosomal back-translocase LepA</fullName>
    </alternativeName>
</protein>
<name>LEPA_HELPG</name>
<organism>
    <name type="scientific">Helicobacter pylori (strain G27)</name>
    <dbReference type="NCBI Taxonomy" id="563041"/>
    <lineage>
        <taxon>Bacteria</taxon>
        <taxon>Pseudomonadati</taxon>
        <taxon>Campylobacterota</taxon>
        <taxon>Epsilonproteobacteria</taxon>
        <taxon>Campylobacterales</taxon>
        <taxon>Helicobacteraceae</taxon>
        <taxon>Helicobacter</taxon>
    </lineage>
</organism>
<accession>B5ZAB8</accession>
<gene>
    <name evidence="1" type="primary">lepA</name>
    <name type="ordered locus">HPG27_332</name>
</gene>
<keyword id="KW-0997">Cell inner membrane</keyword>
<keyword id="KW-1003">Cell membrane</keyword>
<keyword id="KW-0342">GTP-binding</keyword>
<keyword id="KW-0378">Hydrolase</keyword>
<keyword id="KW-0472">Membrane</keyword>
<keyword id="KW-0547">Nucleotide-binding</keyword>
<keyword id="KW-0648">Protein biosynthesis</keyword>
<keyword id="KW-1185">Reference proteome</keyword>
<comment type="function">
    <text evidence="1">Required for accurate and efficient protein synthesis under certain stress conditions. May act as a fidelity factor of the translation reaction, by catalyzing a one-codon backward translocation of tRNAs on improperly translocated ribosomes. Back-translocation proceeds from a post-translocation (POST) complex to a pre-translocation (PRE) complex, thus giving elongation factor G a second chance to translocate the tRNAs correctly. Binds to ribosomes in a GTP-dependent manner.</text>
</comment>
<comment type="catalytic activity">
    <reaction evidence="1">
        <text>GTP + H2O = GDP + phosphate + H(+)</text>
        <dbReference type="Rhea" id="RHEA:19669"/>
        <dbReference type="ChEBI" id="CHEBI:15377"/>
        <dbReference type="ChEBI" id="CHEBI:15378"/>
        <dbReference type="ChEBI" id="CHEBI:37565"/>
        <dbReference type="ChEBI" id="CHEBI:43474"/>
        <dbReference type="ChEBI" id="CHEBI:58189"/>
        <dbReference type="EC" id="3.6.5.n1"/>
    </reaction>
</comment>
<comment type="subcellular location">
    <subcellularLocation>
        <location evidence="1">Cell inner membrane</location>
        <topology evidence="1">Peripheral membrane protein</topology>
        <orientation evidence="1">Cytoplasmic side</orientation>
    </subcellularLocation>
</comment>
<comment type="similarity">
    <text evidence="1">Belongs to the TRAFAC class translation factor GTPase superfamily. Classic translation factor GTPase family. LepA subfamily.</text>
</comment>
<proteinExistence type="inferred from homology"/>
<reference key="1">
    <citation type="journal article" date="2009" name="J. Bacteriol.">
        <title>The complete genome sequence of Helicobacter pylori strain G27.</title>
        <authorList>
            <person name="Baltrus D.A."/>
            <person name="Amieva M.R."/>
            <person name="Covacci A."/>
            <person name="Lowe T.M."/>
            <person name="Merrell D.S."/>
            <person name="Ottemann K.M."/>
            <person name="Stein M."/>
            <person name="Salama N.R."/>
            <person name="Guillemin K."/>
        </authorList>
    </citation>
    <scope>NUCLEOTIDE SEQUENCE [LARGE SCALE GENOMIC DNA]</scope>
    <source>
        <strain>G27</strain>
    </source>
</reference>
<dbReference type="EC" id="3.6.5.n1" evidence="1"/>
<dbReference type="EMBL" id="CP001173">
    <property type="protein sequence ID" value="ACI27098.1"/>
    <property type="molecule type" value="Genomic_DNA"/>
</dbReference>
<dbReference type="SMR" id="B5ZAB8"/>
<dbReference type="KEGG" id="hpg:HPG27_332"/>
<dbReference type="HOGENOM" id="CLU_009995_3_3_7"/>
<dbReference type="Proteomes" id="UP000001735">
    <property type="component" value="Chromosome"/>
</dbReference>
<dbReference type="GO" id="GO:0005886">
    <property type="term" value="C:plasma membrane"/>
    <property type="evidence" value="ECO:0007669"/>
    <property type="project" value="UniProtKB-SubCell"/>
</dbReference>
<dbReference type="GO" id="GO:0005525">
    <property type="term" value="F:GTP binding"/>
    <property type="evidence" value="ECO:0007669"/>
    <property type="project" value="UniProtKB-UniRule"/>
</dbReference>
<dbReference type="GO" id="GO:0003924">
    <property type="term" value="F:GTPase activity"/>
    <property type="evidence" value="ECO:0007669"/>
    <property type="project" value="UniProtKB-UniRule"/>
</dbReference>
<dbReference type="GO" id="GO:0043022">
    <property type="term" value="F:ribosome binding"/>
    <property type="evidence" value="ECO:0007669"/>
    <property type="project" value="UniProtKB-UniRule"/>
</dbReference>
<dbReference type="GO" id="GO:0003746">
    <property type="term" value="F:translation elongation factor activity"/>
    <property type="evidence" value="ECO:0007669"/>
    <property type="project" value="UniProtKB-UniRule"/>
</dbReference>
<dbReference type="GO" id="GO:0045727">
    <property type="term" value="P:positive regulation of translation"/>
    <property type="evidence" value="ECO:0007669"/>
    <property type="project" value="UniProtKB-UniRule"/>
</dbReference>
<dbReference type="CDD" id="cd03699">
    <property type="entry name" value="EF4_II"/>
    <property type="match status" value="1"/>
</dbReference>
<dbReference type="CDD" id="cd16260">
    <property type="entry name" value="EF4_III"/>
    <property type="match status" value="1"/>
</dbReference>
<dbReference type="CDD" id="cd01890">
    <property type="entry name" value="LepA"/>
    <property type="match status" value="1"/>
</dbReference>
<dbReference type="CDD" id="cd03709">
    <property type="entry name" value="lepA_C"/>
    <property type="match status" value="1"/>
</dbReference>
<dbReference type="FunFam" id="3.40.50.300:FF:000078">
    <property type="entry name" value="Elongation factor 4"/>
    <property type="match status" value="1"/>
</dbReference>
<dbReference type="FunFam" id="3.30.70.240:FF:000007">
    <property type="entry name" value="Translation factor GUF1, mitochondrial"/>
    <property type="match status" value="1"/>
</dbReference>
<dbReference type="FunFam" id="3.30.70.2570:FF:000001">
    <property type="entry name" value="Translation factor GUF1, mitochondrial"/>
    <property type="match status" value="1"/>
</dbReference>
<dbReference type="FunFam" id="3.30.70.870:FF:000004">
    <property type="entry name" value="Translation factor GUF1, mitochondrial"/>
    <property type="match status" value="1"/>
</dbReference>
<dbReference type="Gene3D" id="3.30.70.240">
    <property type="match status" value="1"/>
</dbReference>
<dbReference type="Gene3D" id="3.30.70.2570">
    <property type="entry name" value="Elongation factor 4, C-terminal domain"/>
    <property type="match status" value="1"/>
</dbReference>
<dbReference type="Gene3D" id="3.30.70.870">
    <property type="entry name" value="Elongation Factor G (Translational Gtpase), domain 3"/>
    <property type="match status" value="1"/>
</dbReference>
<dbReference type="Gene3D" id="3.40.50.300">
    <property type="entry name" value="P-loop containing nucleotide triphosphate hydrolases"/>
    <property type="match status" value="1"/>
</dbReference>
<dbReference type="Gene3D" id="2.40.30.10">
    <property type="entry name" value="Translation factors"/>
    <property type="match status" value="1"/>
</dbReference>
<dbReference type="HAMAP" id="MF_00071">
    <property type="entry name" value="LepA"/>
    <property type="match status" value="1"/>
</dbReference>
<dbReference type="InterPro" id="IPR006297">
    <property type="entry name" value="EF-4"/>
</dbReference>
<dbReference type="InterPro" id="IPR035647">
    <property type="entry name" value="EFG_III/V"/>
</dbReference>
<dbReference type="InterPro" id="IPR000640">
    <property type="entry name" value="EFG_V-like"/>
</dbReference>
<dbReference type="InterPro" id="IPR004161">
    <property type="entry name" value="EFTu-like_2"/>
</dbReference>
<dbReference type="InterPro" id="IPR031157">
    <property type="entry name" value="G_TR_CS"/>
</dbReference>
<dbReference type="InterPro" id="IPR038363">
    <property type="entry name" value="LepA_C_sf"/>
</dbReference>
<dbReference type="InterPro" id="IPR013842">
    <property type="entry name" value="LepA_CTD"/>
</dbReference>
<dbReference type="InterPro" id="IPR035654">
    <property type="entry name" value="LepA_IV"/>
</dbReference>
<dbReference type="InterPro" id="IPR027417">
    <property type="entry name" value="P-loop_NTPase"/>
</dbReference>
<dbReference type="InterPro" id="IPR005225">
    <property type="entry name" value="Small_GTP-bd"/>
</dbReference>
<dbReference type="InterPro" id="IPR000795">
    <property type="entry name" value="T_Tr_GTP-bd_dom"/>
</dbReference>
<dbReference type="InterPro" id="IPR009000">
    <property type="entry name" value="Transl_B-barrel_sf"/>
</dbReference>
<dbReference type="NCBIfam" id="TIGR01393">
    <property type="entry name" value="lepA"/>
    <property type="match status" value="1"/>
</dbReference>
<dbReference type="NCBIfam" id="TIGR00231">
    <property type="entry name" value="small_GTP"/>
    <property type="match status" value="1"/>
</dbReference>
<dbReference type="PANTHER" id="PTHR43512:SF4">
    <property type="entry name" value="TRANSLATION FACTOR GUF1 HOMOLOG, CHLOROPLASTIC"/>
    <property type="match status" value="1"/>
</dbReference>
<dbReference type="PANTHER" id="PTHR43512">
    <property type="entry name" value="TRANSLATION FACTOR GUF1-RELATED"/>
    <property type="match status" value="1"/>
</dbReference>
<dbReference type="Pfam" id="PF00679">
    <property type="entry name" value="EFG_C"/>
    <property type="match status" value="1"/>
</dbReference>
<dbReference type="Pfam" id="PF00009">
    <property type="entry name" value="GTP_EFTU"/>
    <property type="match status" value="1"/>
</dbReference>
<dbReference type="Pfam" id="PF03144">
    <property type="entry name" value="GTP_EFTU_D2"/>
    <property type="match status" value="1"/>
</dbReference>
<dbReference type="Pfam" id="PF06421">
    <property type="entry name" value="LepA_C"/>
    <property type="match status" value="1"/>
</dbReference>
<dbReference type="PRINTS" id="PR00315">
    <property type="entry name" value="ELONGATNFCT"/>
</dbReference>
<dbReference type="SUPFAM" id="SSF54980">
    <property type="entry name" value="EF-G C-terminal domain-like"/>
    <property type="match status" value="2"/>
</dbReference>
<dbReference type="SUPFAM" id="SSF52540">
    <property type="entry name" value="P-loop containing nucleoside triphosphate hydrolases"/>
    <property type="match status" value="1"/>
</dbReference>
<dbReference type="SUPFAM" id="SSF50447">
    <property type="entry name" value="Translation proteins"/>
    <property type="match status" value="1"/>
</dbReference>
<dbReference type="PROSITE" id="PS00301">
    <property type="entry name" value="G_TR_1"/>
    <property type="match status" value="1"/>
</dbReference>
<dbReference type="PROSITE" id="PS51722">
    <property type="entry name" value="G_TR_2"/>
    <property type="match status" value="1"/>
</dbReference>
<evidence type="ECO:0000255" key="1">
    <source>
        <dbReference type="HAMAP-Rule" id="MF_00071"/>
    </source>
</evidence>
<feature type="chain" id="PRO_1000092406" description="Elongation factor 4">
    <location>
        <begin position="1"/>
        <end position="602"/>
    </location>
</feature>
<feature type="domain" description="tr-type G">
    <location>
        <begin position="8"/>
        <end position="189"/>
    </location>
</feature>
<feature type="binding site" evidence="1">
    <location>
        <begin position="20"/>
        <end position="25"/>
    </location>
    <ligand>
        <name>GTP</name>
        <dbReference type="ChEBI" id="CHEBI:37565"/>
    </ligand>
</feature>
<feature type="binding site" evidence="1">
    <location>
        <begin position="136"/>
        <end position="139"/>
    </location>
    <ligand>
        <name>GTP</name>
        <dbReference type="ChEBI" id="CHEBI:37565"/>
    </ligand>
</feature>